<name>NSCC_TRIRC</name>
<organism>
    <name type="scientific">Trichophyton rubrum (strain ATCC MYA-4607 / CBS 118892)</name>
    <name type="common">Athlete's foot fungus</name>
    <dbReference type="NCBI Taxonomy" id="559305"/>
    <lineage>
        <taxon>Eukaryota</taxon>
        <taxon>Fungi</taxon>
        <taxon>Dikarya</taxon>
        <taxon>Ascomycota</taxon>
        <taxon>Pezizomycotina</taxon>
        <taxon>Eurotiomycetes</taxon>
        <taxon>Eurotiomycetidae</taxon>
        <taxon>Onygenales</taxon>
        <taxon>Arthrodermataceae</taxon>
        <taxon>Trichophyton</taxon>
    </lineage>
</organism>
<keyword id="KW-0274">FAD</keyword>
<keyword id="KW-0285">Flavoprotein</keyword>
<keyword id="KW-0325">Glycoprotein</keyword>
<keyword id="KW-0503">Monooxygenase</keyword>
<keyword id="KW-0560">Oxidoreductase</keyword>
<keyword id="KW-1185">Reference proteome</keyword>
<keyword id="KW-0732">Signal</keyword>
<protein>
    <recommendedName>
        <fullName evidence="7">FAD-dependent monooxygenase nscC</fullName>
        <ecNumber evidence="9">1.-.-.-</ecNumber>
    </recommendedName>
    <alternativeName>
        <fullName evidence="7">Neosartoricin B biosynthesis protein C</fullName>
    </alternativeName>
</protein>
<dbReference type="EC" id="1.-.-.-" evidence="9"/>
<dbReference type="EMBL" id="GG700661">
    <property type="protein sequence ID" value="EGD92144.1"/>
    <property type="molecule type" value="Genomic_DNA"/>
</dbReference>
<dbReference type="RefSeq" id="XP_003231061.1">
    <property type="nucleotide sequence ID" value="XM_003231013.1"/>
</dbReference>
<dbReference type="SMR" id="F2T0M2"/>
<dbReference type="STRING" id="559305.F2T0M2"/>
<dbReference type="GlyCosmos" id="F2T0M2">
    <property type="glycosylation" value="5 sites, No reported glycans"/>
</dbReference>
<dbReference type="GeneID" id="10377339"/>
<dbReference type="VEuPathDB" id="FungiDB:TERG_08359"/>
<dbReference type="eggNOG" id="ENOG502SIVG">
    <property type="taxonomic scope" value="Eukaryota"/>
</dbReference>
<dbReference type="HOGENOM" id="CLU_040697_0_0_1"/>
<dbReference type="InParanoid" id="F2T0M2"/>
<dbReference type="OMA" id="IPLIHYH"/>
<dbReference type="OrthoDB" id="47494at2759"/>
<dbReference type="Proteomes" id="UP000008864">
    <property type="component" value="Unassembled WGS sequence"/>
</dbReference>
<dbReference type="GO" id="GO:0071949">
    <property type="term" value="F:FAD binding"/>
    <property type="evidence" value="ECO:0007669"/>
    <property type="project" value="InterPro"/>
</dbReference>
<dbReference type="GO" id="GO:0004497">
    <property type="term" value="F:monooxygenase activity"/>
    <property type="evidence" value="ECO:0007669"/>
    <property type="project" value="UniProtKB-KW"/>
</dbReference>
<dbReference type="Gene3D" id="3.50.50.60">
    <property type="entry name" value="FAD/NAD(P)-binding domain"/>
    <property type="match status" value="1"/>
</dbReference>
<dbReference type="InterPro" id="IPR002938">
    <property type="entry name" value="FAD-bd"/>
</dbReference>
<dbReference type="InterPro" id="IPR036188">
    <property type="entry name" value="FAD/NAD-bd_sf"/>
</dbReference>
<dbReference type="PANTHER" id="PTHR47178:SF4">
    <property type="entry name" value="FAD-DEPENDENT MONOOXYGENASE APTC"/>
    <property type="match status" value="1"/>
</dbReference>
<dbReference type="PANTHER" id="PTHR47178">
    <property type="entry name" value="MONOOXYGENASE, FAD-BINDING"/>
    <property type="match status" value="1"/>
</dbReference>
<dbReference type="Pfam" id="PF01494">
    <property type="entry name" value="FAD_binding_3"/>
    <property type="match status" value="1"/>
</dbReference>
<dbReference type="PRINTS" id="PR00420">
    <property type="entry name" value="RNGMNOXGNASE"/>
</dbReference>
<dbReference type="SUPFAM" id="SSF51905">
    <property type="entry name" value="FAD/NAD(P)-binding domain"/>
    <property type="match status" value="1"/>
</dbReference>
<proteinExistence type="inferred from homology"/>
<gene>
    <name evidence="7" type="primary">nscC</name>
    <name type="ORF">TERG_08359</name>
</gene>
<reference key="1">
    <citation type="journal article" date="2012" name="MBio">
        <title>Comparative genome analysis of Trichophyton rubrum and related dermatophytes reveals candidate genes involved in infection.</title>
        <authorList>
            <person name="Martinez D.A."/>
            <person name="Oliver B.G."/>
            <person name="Graeser Y."/>
            <person name="Goldberg J.M."/>
            <person name="Li W."/>
            <person name="Martinez-Rossi N.M."/>
            <person name="Monod M."/>
            <person name="Shelest E."/>
            <person name="Barton R.C."/>
            <person name="Birch E."/>
            <person name="Brakhage A.A."/>
            <person name="Chen Z."/>
            <person name="Gurr S.J."/>
            <person name="Heiman D."/>
            <person name="Heitman J."/>
            <person name="Kosti I."/>
            <person name="Rossi A."/>
            <person name="Saif S."/>
            <person name="Samalova M."/>
            <person name="Saunders C.W."/>
            <person name="Shea T."/>
            <person name="Summerbell R.C."/>
            <person name="Xu J."/>
            <person name="Young S."/>
            <person name="Zeng Q."/>
            <person name="Birren B.W."/>
            <person name="Cuomo C.A."/>
            <person name="White T.C."/>
        </authorList>
    </citation>
    <scope>NUCLEOTIDE SEQUENCE [LARGE SCALE GENOMIC DNA]</scope>
    <source>
        <strain>ATCC MYA-4607 / CBS 118892</strain>
    </source>
</reference>
<reference key="2">
    <citation type="journal article" date="2013" name="ACS Synth. Biol.">
        <title>Discovery of cryptic polyketide metabolites from dermatophytes using heterologous expression in Aspergillus nidulans.</title>
        <authorList>
            <person name="Yin W.B."/>
            <person name="Chooi Y.H."/>
            <person name="Smith A.R."/>
            <person name="Cacho R.A."/>
            <person name="Hu Y."/>
            <person name="White T.C."/>
            <person name="Tang Y."/>
        </authorList>
    </citation>
    <scope>FUNCTION</scope>
</reference>
<sequence>MGKPQETILIIGAGIAGLTASRLPTNNGIPNIVFEASTPERNQGFAISLQEFGYSSLLAALGDLPLSNLTRGVAPDRQIGGTGWIDQALRDNRTGELLVAPDLTTMKQTIVRANRNALRHWIADCGEDELDVRYGHKLRRIEGKLGDITAVFENHAKYKGSLVIAADGVNSTTRSQILPNVIPETIPLIHYHGEFQVSHSAFDKLIRPHSGHSNILVGVGDRFNTPLSICNVTKTKVHLDWSYSRPVKGENDTLYRPNVPSEEAKQIPPALLEELDALSLAEPWKNFLNSESLKTHRVFHWTTRCVYITQDDARRAGEQGVVFVGDSWHAMPIFGGEGGNHALLDGVELANAIIKSTASGGKDGWDNVVKSYYAGAWKRSQEAVRRSTQRFFLLHRPAKEWKEISEKKKKPA</sequence>
<comment type="function">
    <text evidence="1 3 6">FAD-dependent monooxygenase; part of the gene cluster that mediates the biosynthesis of neosartoricin B, a prenylated anthracenone that probably exhibits T-cell antiproliferative activity, suggestive of a physiological role as an immunosuppressive agent (PubMed:23758576). The non-reducing polyketide synthase nscA probably synthesizes and cyclizes the decaketide backbone (By similarity). The hydrolase nscB then mediates the product release through hydrolysis followed by spontaneous decarboxylation (By similarity). The prenyltransferase nscD catalyzes the addition of the dimethylallyl group to the aromatic C5 (By similarity). The FAD-dependent monooxygenase nscC is then responsible for the stereospecific hydroxylation at C2 (By similarity). Neosartoricin B can be converted into two additional compounds neosartoricins C and D (By similarity). Neosartoricin C is a spirocyclic compound that is cyclized through the attack of C3 hydroxyl on C14, followed by dehydration (By similarity). On the other hand, neosartoricin D is a further cyclized compound in which attack of C2 on C14 in neosartoricin C results in the formation of the acetal-containing dioxabicyclo-octanone ring (By similarity). Both of these compounds are novel and possibly represent related metabolites of the gene cluster (By similarity).</text>
</comment>
<comment type="cofactor">
    <cofactor evidence="8">
        <name>FAD</name>
        <dbReference type="ChEBI" id="CHEBI:57692"/>
    </cofactor>
</comment>
<comment type="pathway">
    <text evidence="9">Secondary metabolite biosynthesis.</text>
</comment>
<comment type="similarity">
    <text evidence="8">Belongs to the paxM FAD-dependent monooxygenase family.</text>
</comment>
<accession>F2T0M2</accession>
<feature type="signal peptide" evidence="4">
    <location>
        <begin position="1"/>
        <end position="21"/>
    </location>
</feature>
<feature type="chain" id="PRO_0000437913" description="FAD-dependent monooxygenase nscC">
    <location>
        <begin position="22"/>
        <end position="412"/>
    </location>
</feature>
<feature type="binding site" evidence="2">
    <location>
        <position position="35"/>
    </location>
    <ligand>
        <name>FAD</name>
        <dbReference type="ChEBI" id="CHEBI:57692"/>
    </ligand>
</feature>
<feature type="binding site" evidence="2">
    <location>
        <position position="46"/>
    </location>
    <ligand>
        <name>FAD</name>
        <dbReference type="ChEBI" id="CHEBI:57692"/>
    </ligand>
</feature>
<feature type="binding site" evidence="2">
    <location>
        <position position="119"/>
    </location>
    <ligand>
        <name>FAD</name>
        <dbReference type="ChEBI" id="CHEBI:57692"/>
    </ligand>
</feature>
<feature type="binding site" evidence="2">
    <location>
        <position position="326"/>
    </location>
    <ligand>
        <name>FAD</name>
        <dbReference type="ChEBI" id="CHEBI:57692"/>
    </ligand>
</feature>
<feature type="binding site" evidence="2">
    <location>
        <position position="339"/>
    </location>
    <ligand>
        <name>FAD</name>
        <dbReference type="ChEBI" id="CHEBI:57692"/>
    </ligand>
</feature>
<feature type="glycosylation site" description="N-linked (GlcNAc...) asparagine" evidence="5">
    <location>
        <position position="68"/>
    </location>
</feature>
<feature type="glycosylation site" description="N-linked (GlcNAc...) asparagine" evidence="5">
    <location>
        <position position="92"/>
    </location>
</feature>
<feature type="glycosylation site" description="N-linked (GlcNAc...) asparagine" evidence="5">
    <location>
        <position position="170"/>
    </location>
</feature>
<feature type="glycosylation site" description="N-linked (GlcNAc...) asparagine" evidence="5">
    <location>
        <position position="231"/>
    </location>
</feature>
<feature type="glycosylation site" description="N-linked (GlcNAc...) asparagine" evidence="5">
    <location>
        <position position="251"/>
    </location>
</feature>
<evidence type="ECO:0000250" key="1">
    <source>
        <dbReference type="UniProtKB" id="A1D8J0"/>
    </source>
</evidence>
<evidence type="ECO:0000250" key="2">
    <source>
        <dbReference type="UniProtKB" id="B8M9J8"/>
    </source>
</evidence>
<evidence type="ECO:0000250" key="3">
    <source>
        <dbReference type="UniProtKB" id="F2S701"/>
    </source>
</evidence>
<evidence type="ECO:0000255" key="4"/>
<evidence type="ECO:0000255" key="5">
    <source>
        <dbReference type="PROSITE-ProRule" id="PRU00498"/>
    </source>
</evidence>
<evidence type="ECO:0000269" key="6">
    <source>
    </source>
</evidence>
<evidence type="ECO:0000303" key="7">
    <source>
    </source>
</evidence>
<evidence type="ECO:0000305" key="8"/>
<evidence type="ECO:0000305" key="9">
    <source>
    </source>
</evidence>